<protein>
    <recommendedName>
        <fullName evidence="1 16">Replication initiation control protein YabA</fullName>
    </recommendedName>
</protein>
<dbReference type="EMBL" id="D26185">
    <property type="protein sequence ID" value="BAA05269.1"/>
    <property type="molecule type" value="Genomic_DNA"/>
</dbReference>
<dbReference type="EMBL" id="AL009126">
    <property type="protein sequence ID" value="CAB11809.1"/>
    <property type="molecule type" value="Genomic_DNA"/>
</dbReference>
<dbReference type="PIR" id="S66063">
    <property type="entry name" value="S66063"/>
</dbReference>
<dbReference type="RefSeq" id="WP_003218308.1">
    <property type="nucleotide sequence ID" value="NZ_OZ025638.1"/>
</dbReference>
<dbReference type="PDB" id="5DOL">
    <property type="method" value="X-ray"/>
    <property type="resolution" value="2.70 A"/>
    <property type="chains" value="A/B=1-62"/>
</dbReference>
<dbReference type="PDBsum" id="5DOL"/>
<dbReference type="SMR" id="P37542"/>
<dbReference type="DIP" id="DIP-61106N"/>
<dbReference type="FunCoup" id="P37542">
    <property type="interactions" value="19"/>
</dbReference>
<dbReference type="IntAct" id="P37542">
    <property type="interactions" value="7"/>
</dbReference>
<dbReference type="STRING" id="224308.BSU00330"/>
<dbReference type="PaxDb" id="224308-BSU00330"/>
<dbReference type="DNASU" id="937008"/>
<dbReference type="EnsemblBacteria" id="CAB11809">
    <property type="protein sequence ID" value="CAB11809"/>
    <property type="gene ID" value="BSU_00330"/>
</dbReference>
<dbReference type="GeneID" id="86871206"/>
<dbReference type="GeneID" id="937008"/>
<dbReference type="KEGG" id="bsu:BSU00330"/>
<dbReference type="PATRIC" id="fig|224308.179.peg.33"/>
<dbReference type="eggNOG" id="COG4467">
    <property type="taxonomic scope" value="Bacteria"/>
</dbReference>
<dbReference type="InParanoid" id="P37542"/>
<dbReference type="OrthoDB" id="2112130at2"/>
<dbReference type="PhylomeDB" id="P37542"/>
<dbReference type="BioCyc" id="BSUB:BSU00330-MONOMER"/>
<dbReference type="PRO" id="PR:P37542"/>
<dbReference type="Proteomes" id="UP000001570">
    <property type="component" value="Chromosome"/>
</dbReference>
<dbReference type="GO" id="GO:0009295">
    <property type="term" value="C:nucleoid"/>
    <property type="evidence" value="ECO:0007669"/>
    <property type="project" value="UniProtKB-SubCell"/>
</dbReference>
<dbReference type="GO" id="GO:0042802">
    <property type="term" value="F:identical protein binding"/>
    <property type="evidence" value="ECO:0000353"/>
    <property type="project" value="IntAct"/>
</dbReference>
<dbReference type="GO" id="GO:0006974">
    <property type="term" value="P:DNA damage response"/>
    <property type="evidence" value="ECO:0000315"/>
    <property type="project" value="UniProtKB"/>
</dbReference>
<dbReference type="GO" id="GO:0006260">
    <property type="term" value="P:DNA replication"/>
    <property type="evidence" value="ECO:0007669"/>
    <property type="project" value="UniProtKB-UniRule"/>
</dbReference>
<dbReference type="GO" id="GO:0030174">
    <property type="term" value="P:regulation of DNA-templated DNA replication initiation"/>
    <property type="evidence" value="ECO:0000315"/>
    <property type="project" value="UniProtKB"/>
</dbReference>
<dbReference type="Gene3D" id="1.20.5.1160">
    <property type="entry name" value="Vasodilator-stimulated phosphoprotein"/>
    <property type="match status" value="1"/>
</dbReference>
<dbReference type="HAMAP" id="MF_01159">
    <property type="entry name" value="YabA"/>
    <property type="match status" value="1"/>
</dbReference>
<dbReference type="InterPro" id="IPR010377">
    <property type="entry name" value="YabA"/>
</dbReference>
<dbReference type="NCBIfam" id="NF009644">
    <property type="entry name" value="PRK13169.1-5"/>
    <property type="match status" value="1"/>
</dbReference>
<dbReference type="Pfam" id="PF06156">
    <property type="entry name" value="YabA"/>
    <property type="match status" value="1"/>
</dbReference>
<dbReference type="PIRSF" id="PIRSF021439">
    <property type="entry name" value="DUF972"/>
    <property type="match status" value="1"/>
</dbReference>
<reference key="1">
    <citation type="journal article" date="1994" name="DNA Res.">
        <title>Systematic sequencing of the 180 kilobase region of the Bacillus subtilis chromosome containing the replication origin.</title>
        <authorList>
            <person name="Ogasawara N."/>
            <person name="Nakai S."/>
            <person name="Yoshikawa H."/>
        </authorList>
    </citation>
    <scope>NUCLEOTIDE SEQUENCE [GENOMIC DNA]</scope>
    <source>
        <strain>168</strain>
    </source>
</reference>
<reference key="2">
    <citation type="journal article" date="1997" name="Nature">
        <title>The complete genome sequence of the Gram-positive bacterium Bacillus subtilis.</title>
        <authorList>
            <person name="Kunst F."/>
            <person name="Ogasawara N."/>
            <person name="Moszer I."/>
            <person name="Albertini A.M."/>
            <person name="Alloni G."/>
            <person name="Azevedo V."/>
            <person name="Bertero M.G."/>
            <person name="Bessieres P."/>
            <person name="Bolotin A."/>
            <person name="Borchert S."/>
            <person name="Borriss R."/>
            <person name="Boursier L."/>
            <person name="Brans A."/>
            <person name="Braun M."/>
            <person name="Brignell S.C."/>
            <person name="Bron S."/>
            <person name="Brouillet S."/>
            <person name="Bruschi C.V."/>
            <person name="Caldwell B."/>
            <person name="Capuano V."/>
            <person name="Carter N.M."/>
            <person name="Choi S.-K."/>
            <person name="Codani J.-J."/>
            <person name="Connerton I.F."/>
            <person name="Cummings N.J."/>
            <person name="Daniel R.A."/>
            <person name="Denizot F."/>
            <person name="Devine K.M."/>
            <person name="Duesterhoeft A."/>
            <person name="Ehrlich S.D."/>
            <person name="Emmerson P.T."/>
            <person name="Entian K.-D."/>
            <person name="Errington J."/>
            <person name="Fabret C."/>
            <person name="Ferrari E."/>
            <person name="Foulger D."/>
            <person name="Fritz C."/>
            <person name="Fujita M."/>
            <person name="Fujita Y."/>
            <person name="Fuma S."/>
            <person name="Galizzi A."/>
            <person name="Galleron N."/>
            <person name="Ghim S.-Y."/>
            <person name="Glaser P."/>
            <person name="Goffeau A."/>
            <person name="Golightly E.J."/>
            <person name="Grandi G."/>
            <person name="Guiseppi G."/>
            <person name="Guy B.J."/>
            <person name="Haga K."/>
            <person name="Haiech J."/>
            <person name="Harwood C.R."/>
            <person name="Henaut A."/>
            <person name="Hilbert H."/>
            <person name="Holsappel S."/>
            <person name="Hosono S."/>
            <person name="Hullo M.-F."/>
            <person name="Itaya M."/>
            <person name="Jones L.-M."/>
            <person name="Joris B."/>
            <person name="Karamata D."/>
            <person name="Kasahara Y."/>
            <person name="Klaerr-Blanchard M."/>
            <person name="Klein C."/>
            <person name="Kobayashi Y."/>
            <person name="Koetter P."/>
            <person name="Koningstein G."/>
            <person name="Krogh S."/>
            <person name="Kumano M."/>
            <person name="Kurita K."/>
            <person name="Lapidus A."/>
            <person name="Lardinois S."/>
            <person name="Lauber J."/>
            <person name="Lazarevic V."/>
            <person name="Lee S.-M."/>
            <person name="Levine A."/>
            <person name="Liu H."/>
            <person name="Masuda S."/>
            <person name="Mauel C."/>
            <person name="Medigue C."/>
            <person name="Medina N."/>
            <person name="Mellado R.P."/>
            <person name="Mizuno M."/>
            <person name="Moestl D."/>
            <person name="Nakai S."/>
            <person name="Noback M."/>
            <person name="Noone D."/>
            <person name="O'Reilly M."/>
            <person name="Ogawa K."/>
            <person name="Ogiwara A."/>
            <person name="Oudega B."/>
            <person name="Park S.-H."/>
            <person name="Parro V."/>
            <person name="Pohl T.M."/>
            <person name="Portetelle D."/>
            <person name="Porwollik S."/>
            <person name="Prescott A.M."/>
            <person name="Presecan E."/>
            <person name="Pujic P."/>
            <person name="Purnelle B."/>
            <person name="Rapoport G."/>
            <person name="Rey M."/>
            <person name="Reynolds S."/>
            <person name="Rieger M."/>
            <person name="Rivolta C."/>
            <person name="Rocha E."/>
            <person name="Roche B."/>
            <person name="Rose M."/>
            <person name="Sadaie Y."/>
            <person name="Sato T."/>
            <person name="Scanlan E."/>
            <person name="Schleich S."/>
            <person name="Schroeter R."/>
            <person name="Scoffone F."/>
            <person name="Sekiguchi J."/>
            <person name="Sekowska A."/>
            <person name="Seror S.J."/>
            <person name="Serror P."/>
            <person name="Shin B.-S."/>
            <person name="Soldo B."/>
            <person name="Sorokin A."/>
            <person name="Tacconi E."/>
            <person name="Takagi T."/>
            <person name="Takahashi H."/>
            <person name="Takemaru K."/>
            <person name="Takeuchi M."/>
            <person name="Tamakoshi A."/>
            <person name="Tanaka T."/>
            <person name="Terpstra P."/>
            <person name="Tognoni A."/>
            <person name="Tosato V."/>
            <person name="Uchiyama S."/>
            <person name="Vandenbol M."/>
            <person name="Vannier F."/>
            <person name="Vassarotti A."/>
            <person name="Viari A."/>
            <person name="Wambutt R."/>
            <person name="Wedler E."/>
            <person name="Wedler H."/>
            <person name="Weitzenegger T."/>
            <person name="Winters P."/>
            <person name="Wipat A."/>
            <person name="Yamamoto H."/>
            <person name="Yamane K."/>
            <person name="Yasumoto K."/>
            <person name="Yata K."/>
            <person name="Yoshida K."/>
            <person name="Yoshikawa H.-F."/>
            <person name="Zumstein E."/>
            <person name="Yoshikawa H."/>
            <person name="Danchin A."/>
        </authorList>
    </citation>
    <scope>NUCLEOTIDE SEQUENCE [LARGE SCALE GENOMIC DNA]</scope>
    <source>
        <strain>168</strain>
    </source>
</reference>
<reference key="3">
    <citation type="journal article" date="2002" name="Proc. Natl. Acad. Sci. U.S.A.">
        <title>An expanded view of bacterial DNA replication.</title>
        <authorList>
            <person name="Noirot-Gros M.-F."/>
            <person name="Dervyn E."/>
            <person name="Wu L.J."/>
            <person name="Mervelet P."/>
            <person name="Errington J."/>
            <person name="Ehrlich S.D."/>
            <person name="Noirot P."/>
        </authorList>
    </citation>
    <scope>FUNCTION</scope>
    <scope>SUBUNIT</scope>
    <scope>DISRUPTION PHENOTYPE</scope>
    <source>
        <strain>168</strain>
    </source>
</reference>
<reference key="4">
    <citation type="journal article" date="2005" name="FEMS Microbiol. Lett.">
        <title>Bacillus subtilis YabA is involved in determining the timing and synchrony of replication initiation.</title>
        <authorList>
            <person name="Hayashi M."/>
            <person name="Ogura Y."/>
            <person name="Harry E.J."/>
            <person name="Ogasawara N."/>
            <person name="Moriya S."/>
        </authorList>
    </citation>
    <scope>FUNCTION</scope>
    <scope>SUBCELLULAR LOCATION</scope>
    <scope>DISRUPTION PHENOTYPE</scope>
    <source>
        <strain>CRK6000</strain>
    </source>
</reference>
<reference key="5">
    <citation type="journal article" date="2006" name="Proc. Natl. Acad. Sci. U.S.A.">
        <title>Functional dissection of YabA, a negative regulator of DNA replication initiation in Bacillus subtilis.</title>
        <authorList>
            <person name="Noirot-Gros M.F."/>
            <person name="Velten M."/>
            <person name="Yoshimura M."/>
            <person name="McGovern S."/>
            <person name="Morimoto T."/>
            <person name="Ehrlich S.D."/>
            <person name="Ogasawara N."/>
            <person name="Polard P."/>
            <person name="Noirot P."/>
        </authorList>
    </citation>
    <scope>FUNCTION</scope>
    <scope>PROBABLE COFACTOR</scope>
    <scope>SUBCELLULAR LOCATION</scope>
    <scope>SUBUNIT</scope>
    <scope>INTERACTION WITH ACUB; DNAA; DNAB AND TLPA</scope>
    <scope>DOMAIN</scope>
    <scope>DISRUPTION PHENOTYPE</scope>
    <scope>MUTAGENESIS OF LEU-13; LEU-27; TYR-83; ASN-85; LEU-86; CYS-97; VAL-99; LEU-110 AND CYS-112</scope>
</reference>
<reference key="6">
    <citation type="journal article" date="2008" name="Genes Genet. Syst.">
        <title>The functional analysis of YabA, which interacts with DnaA and regulates initiation of chromosome replication in Bacillus subtils.</title>
        <authorList>
            <person name="Cho E."/>
            <person name="Ogasawara N."/>
            <person name="Ishikawa S."/>
        </authorList>
    </citation>
    <scope>FUNCTION</scope>
    <scope>INTERACTION WITH DNAA</scope>
    <scope>SUBCELLULAR LOCATION</scope>
    <source>
        <strain>CRK6000</strain>
    </source>
</reference>
<reference key="7">
    <citation type="journal article" date="2008" name="Dev. Cell">
        <title>Cell-cycle-dependent spatial sequestration of the DnaA replication initiator protein in Bacillus subtilis.</title>
        <authorList>
            <person name="Soufo C.D."/>
            <person name="Soufo H.J."/>
            <person name="Noirot-Gros M.F."/>
            <person name="Steindorf A."/>
            <person name="Noirot P."/>
            <person name="Graumann P.L."/>
        </authorList>
    </citation>
    <scope>FUNCTION</scope>
    <scope>DISRUPTION PHENOTYPE</scope>
</reference>
<reference key="8">
    <citation type="journal article" date="2009" name="Mol. Microbiol.">
        <title>YabA of Bacillus subtilis controls DnaA-mediated replication initiation but not the transcriptional response to replication stress.</title>
        <authorList>
            <person name="Goranov A.I."/>
            <person name="Breier A.M."/>
            <person name="Merrikh H."/>
            <person name="Grossman A.D."/>
        </authorList>
    </citation>
    <scope>SUBCELLULAR LOCATION</scope>
    <scope>DISRUPTION PHENOTYPE</scope>
    <source>
        <strain>168 / JH642</strain>
    </source>
</reference>
<reference key="9">
    <citation type="journal article" date="2010" name="PLoS Genet.">
        <title>The C-terminal domain of the bacterial SSB protein acts as a DNA maintenance hub at active chromosome replication forks.</title>
        <authorList>
            <person name="Costes A."/>
            <person name="Lecointe F."/>
            <person name="McGovern S."/>
            <person name="Quevillon-Cheruel S."/>
            <person name="Polard P."/>
        </authorList>
    </citation>
    <scope>SUBCELLULAR LOCATION</scope>
    <source>
        <strain>168</strain>
    </source>
</reference>
<reference key="10">
    <citation type="journal article" date="2011" name="Mol. Microbiol.">
        <title>Control of the replication initiator DnaA by an anti-cooperativity factor.</title>
        <authorList>
            <person name="Merrikh H."/>
            <person name="Grossman A.D."/>
        </authorList>
    </citation>
    <scope>FUNCTION</scope>
    <scope>DISRUPTION PHENOTYPE</scope>
</reference>
<reference key="11">
    <citation type="journal article" date="2013" name="Mol. Microbiol.">
        <title>YabA and DnaD inhibit helix assembly of the DNA replication initiation protein DnaA.</title>
        <authorList>
            <person name="Scholefield G."/>
            <person name="Murray H."/>
        </authorList>
    </citation>
    <scope>FUNCTION</scope>
    <scope>SUBUNIT</scope>
    <scope>MUTAGENESIS OF ASN-85</scope>
    <source>
        <strain>168</strain>
    </source>
</reference>
<reference key="12">
    <citation type="journal article" date="2017" name="PLoS Genet.">
        <title>Rapid turnover of DnaA at replication origin regions contributes to initiation control of DNA replication.</title>
        <authorList>
            <person name="Schenk K."/>
            <person name="Hervas A.B."/>
            <person name="Roesch T.C."/>
            <person name="Eisemann M."/>
            <person name="Schmitt B.A."/>
            <person name="Dahlke S."/>
            <person name="Kleine-Borgmann L."/>
            <person name="Murray S.M."/>
            <person name="Graumann P.L."/>
        </authorList>
    </citation>
    <scope>FUNCTION</scope>
    <scope>DISRUPTION PHENOTYPE</scope>
</reference>
<reference key="13">
    <citation type="journal article" date="2018" name="Front. Microbiol.">
        <title>Phosphorylation of the Bacillus subtilis Replication Controller YabA Plays a Role in Regulation of Sporulation and Biofilm Formation.</title>
        <authorList>
            <person name="Garcia Garcia T."/>
            <person name="Ventroux M."/>
            <person name="Derouiche A."/>
            <person name="Bidnenko V."/>
            <person name="Correia Santos S."/>
            <person name="Henry C."/>
            <person name="Mijakovic I."/>
            <person name="Noirot-Gros M.F."/>
            <person name="Poncet S."/>
        </authorList>
    </citation>
    <scope>PROTEIN SEQUENCE OF 68-88</scope>
    <scope>FUNCTION IN SPORULATION</scope>
    <scope>FUNCTION IN BIOFILM FORMATION</scope>
    <scope>INTERACTION WITH ACUB; DNAA; DNAB AND TLPA</scope>
    <scope>SUBCELLULAR LOCATION</scope>
    <scope>INDUCTION</scope>
    <scope>PHOSPHORYLATION AT THR-71</scope>
    <scope>MUTAGENESIS OF THR-71</scope>
    <source>
        <strain>168</strain>
    </source>
</reference>
<reference key="14">
    <citation type="journal article" date="2022" name="PLoS Genet.">
        <title>Structure and kinase activity of bacterial cell cycle regulator CcrZ.</title>
        <authorList>
            <person name="Wozniak K.J."/>
            <person name="Burby P.E."/>
            <person name="Nandakumar J."/>
            <person name="Simmons L.A."/>
        </authorList>
    </citation>
    <scope>DISRUPTION PHENOTYPE</scope>
    <source>
        <strain evidence="17">168 / PY79</strain>
    </source>
</reference>
<reference key="15">
    <citation type="journal article" date="2022" name="Mol. Microbiol.">
        <title>Multiple mechanisms for overcoming lethal over-initiation of DNA replication.</title>
        <authorList>
            <person name="Anderson M.E."/>
            <person name="Smith J.L."/>
            <person name="Grossman A.D."/>
        </authorList>
    </citation>
    <scope>DISRUPTION PHENOTYPE</scope>
    <source>
        <strain>168 / JH642</strain>
    </source>
</reference>
<reference evidence="20" key="16">
    <citation type="journal article" date="2016" name="Nucleic Acids Res.">
        <title>Tetramerization and interdomain flexibility of the replication initiation controller YabA enables simultaneous binding to multiple partners.</title>
        <authorList>
            <person name="Felicori L."/>
            <person name="Jameson K.H."/>
            <person name="Roblin P."/>
            <person name="Fogg M.J."/>
            <person name="Garcia-Garcia T."/>
            <person name="Ventroux M."/>
            <person name="Cherrier M.V."/>
            <person name="Bazin A."/>
            <person name="Noirot P."/>
            <person name="Wilkinson A.J."/>
            <person name="Molina F."/>
            <person name="Terradot L."/>
            <person name="Noirot-Gros M.F."/>
        </authorList>
    </citation>
    <scope>X-RAY CRYSTALLOGRAPHY (2.70 ANGSTROMS) OF 1-62</scope>
    <scope>COFACTOR</scope>
    <scope>SUBUNIT</scope>
    <scope>SUBCELLULAR LOCATION</scope>
    <scope>DOMAIN</scope>
    <scope>MUTAGENESIS OF PHE-94; HIS-95; ILE-96; ARG-105; LYS-106; GLU-107; ASP-108; PHE-111; ASN-117 AND LYS-119</scope>
    <source>
        <strain>168</strain>
    </source>
</reference>
<proteinExistence type="evidence at protein level"/>
<comment type="function">
    <text evidence="1 2 3 4 5 6 9 10 12 15">Involved in control of chromosome replication initiation. Inhibits the cooperative binding of DnaA to the oriC region (PubMed:21895792). Thus negatively regulating initiation of chromosome replication (PubMed:12060778, PubMed:15927750, PubMed:16461910, PubMed:18506095). Inhibits the ability of DnaA-ATP to form a helix on DNA; does not disassemble preformed DnaA-DNA helices in vitro (PubMed:23909787). Decreases the residence time of DnaA on the chromosome at its binding sites (oriC, replication forks and (probably) promoter-binding sites) (PubMed:28166228). Tethers DnaA to the replication machinery via the DNA polymerase beta sliding clamp subunit (dnaN) (PubMed:19081080). Associates with oriC and other DnaA targets on the chromosome in a DnaA-dependent manner (PubMed:21895792).</text>
</comment>
<comment type="cofactor">
    <cofactor evidence="1 11 18">
        <name>Zn(2+)</name>
        <dbReference type="ChEBI" id="CHEBI:29105"/>
    </cofactor>
    <text evidence="1 11">Binds one Zn(2+) ion per subunit (PubMed:26615189).</text>
</comment>
<comment type="subunit">
    <text evidence="2 4 5 10 11 13">Homotetramer (PubMed:16461910). Interacts with both DnaA (PubMed:12060778, PubMed:16461910, PubMed:18506095, PubMed:23909787, PubMed:29619013) and DnaN, possibly acting as a bridge between these two proteins (PubMed:12060778, PubMed:16461910, PubMed:18506095, PubMed:29619013). The N-terminus (residues 1-62) assembles as a head-to-head dimer of dimers with a single long alpha helix, and is probably responsible for tetramerization of the whole protein (PubMed:26615189). The interaction sites for DnaA and DnaN overlap; thus DnaA and DnaN associate with different subunits of the YabA tetramer (PubMed:26615189). Interacts with AcuB and TlpA (PubMed:12060778, PubMed:16461910, PubMed:29619013).</text>
</comment>
<comment type="interaction">
    <interactant intactId="EBI-5243764">
        <id>P37542</id>
    </interactant>
    <interactant intactId="EBI-2014722">
        <id>P05648</id>
        <label>dnaA</label>
    </interactant>
    <organismsDiffer>false</organismsDiffer>
    <experiments>4</experiments>
</comment>
<comment type="interaction">
    <interactant intactId="EBI-5243764">
        <id>P37542</id>
    </interactant>
    <interactant intactId="EBI-5244587">
        <id>P05649</id>
        <label>dnaN</label>
    </interactant>
    <organismsDiffer>false</organismsDiffer>
    <experiments>4</experiments>
</comment>
<comment type="interaction">
    <interactant intactId="EBI-5243764">
        <id>P37542</id>
    </interactant>
    <interactant intactId="EBI-5243764">
        <id>P37542</id>
        <label>yabA</label>
    </interactant>
    <organismsDiffer>false</organismsDiffer>
    <experiments>6</experiments>
</comment>
<comment type="subcellular location">
    <subcellularLocation>
        <location evidence="1 3 4 7 8 11 13">Cytoplasm</location>
        <location evidence="1 3 4 7 8 11 13">Nucleoid</location>
    </subcellularLocation>
    <text evidence="1 3 4 5 7 8 11 12 13">Localizes in tight foci, most of which correspond to the replisome at mid-cell throughout the cell cycle (PubMed:15927750, PubMed:16461910, PubMed:19737352, PubMed:21170359, PubMed:26615189, PubMed:28166228, PubMed:29619013). When replication is blocked foci are also lost (PubMed:19737352). Correct positioning relies on interactions with both DnaA and DnaN, tested by mutagenesis (PubMed:16461910, PubMed:18506095). Positioning does not rely on DnaA, tested in a dnaA deletion strain (PubMed:19737352). Positioning does not rely on the C-terminus of SSB (ssbA) (PubMed:21170359).</text>
</comment>
<comment type="induction">
    <text evidence="13">Constitutively transcribed (PubMed:29619013).</text>
</comment>
<comment type="domain">
    <text evidence="11 18">The N-terminus is probably responsible for self-association (Probable) (PubMed:16461910). The C-terminal domain (residues 62-119) interacts with DnaA or DnaN but not both at the same time (PubMed:26615189).</text>
</comment>
<comment type="PTM">
    <text evidence="13">Phosphorylation of YabA by YabT on Thr-71 enhances the cell's commitment to sporulation, possibly by increasing Spo0A-phosphorylation in cells (PubMed:29619013). The same phosphorylation event probably prevents biofilm formation (PubMed:29619013).</text>
</comment>
<comment type="disruption phenotype">
    <text evidence="2 3 4 6 7 9 12 13 14 15">Greatly reduced growth rate, abnormal nucleoid distribution with increased replication origins per cell and increased cell length (PubMed:12060778, PubMed:19737352, PubMed:36053906). Asynchronous and over initiation of DNA replication (PubMed:15927750, PubMed:16461910). DnaA is no longer tethered to the DNA replication machinery but instead to oriC, allowing it to initiate replication more often (PubMed:19081080). Increased half-life of DnaA binding to oriC (PubMed:28166228). Little or no effect on gene expression during exponetial growth or after replication arrest (PubMed:19737352). Increased amounts of DnaA associate with oriC and other tested DnaA boxes (PubMed:21895792). Significant decrease in heat-resistant spore formation, decrease in biofilm formation (PubMed:29619013). Sensitive to DNA damage (PubMed:35576203). A double temperature-sensitive dnaA1-yabA deletion is synthetically lethal at 37 degrees Celsius in rich medium, has severely impaired growth in minimal medium with greater replication initition and SOS response induction (PubMed:36053906).</text>
</comment>
<comment type="similarity">
    <text evidence="1">Belongs to the YabA family.</text>
</comment>
<keyword id="KW-0002">3D-structure</keyword>
<keyword id="KW-0175">Coiled coil</keyword>
<keyword id="KW-0963">Cytoplasm</keyword>
<keyword id="KW-0903">Direct protein sequencing</keyword>
<keyword id="KW-0235">DNA replication</keyword>
<keyword id="KW-0236">DNA replication inhibitor</keyword>
<keyword id="KW-0479">Metal-binding</keyword>
<keyword id="KW-0597">Phosphoprotein</keyword>
<keyword id="KW-1185">Reference proteome</keyword>
<keyword id="KW-0749">Sporulation</keyword>
<keyword id="KW-0862">Zinc</keyword>
<name>YABA_BACSU</name>
<accession>P37542</accession>
<feature type="chain" id="PRO_0000211906" description="Replication initiation control protein YabA">
    <location>
        <begin position="1"/>
        <end position="119"/>
    </location>
</feature>
<feature type="coiled-coil region" evidence="11 20">
    <location>
        <begin position="1"/>
        <end position="62"/>
    </location>
</feature>
<feature type="binding site" evidence="1 19">
    <location>
        <position position="95"/>
    </location>
    <ligand>
        <name>Zn(2+)</name>
        <dbReference type="ChEBI" id="CHEBI:29105"/>
    </ligand>
</feature>
<feature type="binding site" evidence="1 18 19">
    <location>
        <position position="97"/>
    </location>
    <ligand>
        <name>Zn(2+)</name>
        <dbReference type="ChEBI" id="CHEBI:29105"/>
    </ligand>
</feature>
<feature type="binding site" evidence="1 18 19">
    <location>
        <position position="109"/>
    </location>
    <ligand>
        <name>Zn(2+)</name>
        <dbReference type="ChEBI" id="CHEBI:29105"/>
    </ligand>
</feature>
<feature type="binding site" evidence="1 18 19">
    <location>
        <position position="112"/>
    </location>
    <ligand>
        <name>Zn(2+)</name>
        <dbReference type="ChEBI" id="CHEBI:29105"/>
    </ligand>
</feature>
<feature type="modified residue" description="Phosphothreonine" evidence="13">
    <location>
        <position position="71"/>
    </location>
</feature>
<feature type="mutagenesis site" description="No longer interacts with AcuB or TlpA, still interacts with DnaA and DnaN." evidence="4">
    <original>L</original>
    <variation>A</variation>
    <location>
        <position position="13"/>
    </location>
</feature>
<feature type="mutagenesis site" description="Loss of self and all other interactions." evidence="4">
    <original>L</original>
    <variation>A</variation>
    <location>
        <position position="27"/>
    </location>
</feature>
<feature type="mutagenesis site" description="Loss of protein phosphorylation, no change in replication inititation, subcellular location, or protein interactions, wild-type sporulation efficiency and biofilm formation." evidence="13">
    <original>T</original>
    <variation>A</variation>
    <location>
        <position position="71"/>
    </location>
</feature>
<feature type="mutagenesis site" description="Loss of protein phosphorylation, no change in replication inititation, subcellular location, or protein interactions, increased sporulation efficiency, significant decrease in biofilm formation." evidence="13">
    <original>T</original>
    <variation>D</variation>
    <location>
        <position position="71"/>
    </location>
</feature>
<feature type="mutagenesis site" description="Still self interacts, still interacts with DnaN, no longer interacts with DnaA." evidence="4">
    <original>Y</original>
    <variation>C</variation>
    <location>
        <position position="83"/>
    </location>
</feature>
<feature type="mutagenesis site" description="Still self interacts, still interacts with DnaN, no longer interacts with DnaA, only residual localization, loss of DNA replication control. Decreased ability to disrupt DnaA oligomers." evidence="4 10">
    <original>N</original>
    <variation>D</variation>
    <location>
        <position position="85"/>
    </location>
</feature>
<feature type="mutagenesis site" description="Still self interacts, still interacts with DnaN, no longer interacts with DnaA, only residual localization." evidence="4">
    <original>L</original>
    <variation>P</variation>
    <location>
        <position position="86"/>
    </location>
</feature>
<feature type="mutagenesis site" description="Still self interacts, still interacts with DnaN, no longer interacts with DnaA, only residual localization." evidence="11">
    <original>F</original>
    <variation>I</variation>
    <variation>S</variation>
    <variation>V</variation>
    <location>
        <position position="94"/>
    </location>
</feature>
<feature type="mutagenesis site" description="Still self interacts, still interacts with DnaA and DnaN." evidence="11">
    <original>H</original>
    <variation>G</variation>
    <location>
        <position position="95"/>
    </location>
</feature>
<feature type="mutagenesis site" description="Still self interacts, no longer interacts with DnaA or DnaN." evidence="11">
    <original>H</original>
    <variation>I</variation>
    <variation>L</variation>
    <location>
        <position position="95"/>
    </location>
</feature>
<feature type="mutagenesis site" description="Still self interacts, still interacts with DnaN, no longer interacts with DnaA." evidence="11">
    <original>I</original>
    <variation>N</variation>
    <location>
        <position position="96"/>
    </location>
</feature>
<feature type="mutagenesis site" description="Still self interacts, no longer interacts with DnaA or DnaN." evidence="4">
    <original>C</original>
    <variation>R</variation>
    <location>
        <position position="97"/>
    </location>
</feature>
<feature type="mutagenesis site" description="Still self interacts, still interacts with DnaA, no longer interacts with DnaN, loss of localization." evidence="4">
    <original>V</original>
    <variation>A</variation>
    <location>
        <position position="99"/>
    </location>
</feature>
<feature type="mutagenesis site" description="Still self interacts, still interacts with DnaN, no longer interacts with DnaA, only residual localization." evidence="11">
    <original>R</original>
    <variation>D</variation>
    <variation>E</variation>
    <variation>G</variation>
    <location>
        <position position="105"/>
    </location>
</feature>
<feature type="mutagenesis site" description="Wild-type self interaction and with DnaA and DnaN." evidence="11">
    <original>K</original>
    <variation>A</variation>
    <variation>V</variation>
    <variation>L</variation>
    <variation>E</variation>
    <variation>S</variation>
    <variation>R</variation>
    <location>
        <position position="106"/>
    </location>
</feature>
<feature type="mutagenesis site" description="Still self interacts, still interacts with DnaA, no longer interacts with DnaN, loss of localization." evidence="11">
    <original>E</original>
    <variation>R</variation>
    <variation>D</variation>
    <variation>T</variation>
    <location>
        <position position="107"/>
    </location>
</feature>
<feature type="mutagenesis site" description="Still self interacts, still interacts with DnaA, no longer interacts with DnaN, loss of localization." evidence="11">
    <original>D</original>
    <variation>S</variation>
    <location>
        <position position="108"/>
    </location>
</feature>
<feature type="mutagenesis site" description="Still self interacts, still interacts with DnaA, no longer interacts with DnaN, loss of localization, loss of DNA replication control." evidence="4">
    <original>L</original>
    <variation>P</variation>
    <location>
        <position position="110"/>
    </location>
</feature>
<feature type="mutagenesis site" description="Still self interacts, still interacts with DnaA, no longer interacts with DnaN, loss of localization." evidence="11">
    <original>F</original>
    <variation>Y</variation>
    <variation>N</variation>
    <variation>S</variation>
    <variation>A</variation>
    <variation>D</variation>
    <location>
        <position position="111"/>
    </location>
</feature>
<feature type="mutagenesis site" description="Still self interacts, no longer interacts with DnaA or DnaN." evidence="4">
    <original>C</original>
    <variation>R</variation>
    <location>
        <position position="112"/>
    </location>
</feature>
<feature type="mutagenesis site" description="Still self interacts, still interacts with DnaA, no longer interacts with DnaN." evidence="11">
    <original>N</original>
    <variation>K</variation>
    <location>
        <position position="117"/>
    </location>
</feature>
<feature type="mutagenesis site" description="Still self interacts, still interacts with DnaA, no longer interacts with DnaN." evidence="11">
    <original>K</original>
    <variation>R</variation>
    <location>
        <position position="119"/>
    </location>
</feature>
<feature type="helix" evidence="21">
    <location>
        <begin position="3"/>
        <end position="61"/>
    </location>
</feature>
<organism>
    <name type="scientific">Bacillus subtilis (strain 168)</name>
    <dbReference type="NCBI Taxonomy" id="224308"/>
    <lineage>
        <taxon>Bacteria</taxon>
        <taxon>Bacillati</taxon>
        <taxon>Bacillota</taxon>
        <taxon>Bacilli</taxon>
        <taxon>Bacillales</taxon>
        <taxon>Bacillaceae</taxon>
        <taxon>Bacillus</taxon>
    </lineage>
</organism>
<gene>
    <name evidence="1" type="primary">yabA</name>
    <name type="ordered locus">BSU00330</name>
</gene>
<sequence length="119" mass="14099">MDKKELFDTVINLEEQIGSLYRQLGDLKQHIGEMIEENHHLQLENKHLRKRLDDTTQQIEKFKADKKESKTQKTEQTDIGEGYDNLARLYQEGFHICNVHYGSVRKEDCLFCLSFLNKK</sequence>
<evidence type="ECO:0000255" key="1">
    <source>
        <dbReference type="HAMAP-Rule" id="MF_01159"/>
    </source>
</evidence>
<evidence type="ECO:0000269" key="2">
    <source>
    </source>
</evidence>
<evidence type="ECO:0000269" key="3">
    <source>
    </source>
</evidence>
<evidence type="ECO:0000269" key="4">
    <source>
    </source>
</evidence>
<evidence type="ECO:0000269" key="5">
    <source>
    </source>
</evidence>
<evidence type="ECO:0000269" key="6">
    <source>
    </source>
</evidence>
<evidence type="ECO:0000269" key="7">
    <source>
    </source>
</evidence>
<evidence type="ECO:0000269" key="8">
    <source>
    </source>
</evidence>
<evidence type="ECO:0000269" key="9">
    <source>
    </source>
</evidence>
<evidence type="ECO:0000269" key="10">
    <source>
    </source>
</evidence>
<evidence type="ECO:0000269" key="11">
    <source>
    </source>
</evidence>
<evidence type="ECO:0000269" key="12">
    <source>
    </source>
</evidence>
<evidence type="ECO:0000269" key="13">
    <source>
    </source>
</evidence>
<evidence type="ECO:0000269" key="14">
    <source>
    </source>
</evidence>
<evidence type="ECO:0000269" key="15">
    <source>
    </source>
</evidence>
<evidence type="ECO:0000303" key="16">
    <source>
    </source>
</evidence>
<evidence type="ECO:0000303" key="17">
    <source>
    </source>
</evidence>
<evidence type="ECO:0000305" key="18">
    <source>
    </source>
</evidence>
<evidence type="ECO:0000305" key="19">
    <source>
    </source>
</evidence>
<evidence type="ECO:0007744" key="20">
    <source>
        <dbReference type="PDB" id="5DOL"/>
    </source>
</evidence>
<evidence type="ECO:0007829" key="21">
    <source>
        <dbReference type="PDB" id="5DOL"/>
    </source>
</evidence>